<organism>
    <name type="scientific">Escherichia coli (strain UTI89 / UPEC)</name>
    <dbReference type="NCBI Taxonomy" id="364106"/>
    <lineage>
        <taxon>Bacteria</taxon>
        <taxon>Pseudomonadati</taxon>
        <taxon>Pseudomonadota</taxon>
        <taxon>Gammaproteobacteria</taxon>
        <taxon>Enterobacterales</taxon>
        <taxon>Enterobacteriaceae</taxon>
        <taxon>Escherichia</taxon>
    </lineage>
</organism>
<feature type="chain" id="PRO_1000023799" description="Probable malate:quinone oxidoreductase">
    <location>
        <begin position="1"/>
        <end position="548"/>
    </location>
</feature>
<feature type="region of interest" description="Disordered" evidence="2">
    <location>
        <begin position="521"/>
        <end position="548"/>
    </location>
</feature>
<feature type="compositionally biased region" description="Low complexity" evidence="2">
    <location>
        <begin position="530"/>
        <end position="541"/>
    </location>
</feature>
<comment type="catalytic activity">
    <reaction evidence="1">
        <text>(S)-malate + a quinone = a quinol + oxaloacetate</text>
        <dbReference type="Rhea" id="RHEA:46012"/>
        <dbReference type="ChEBI" id="CHEBI:15589"/>
        <dbReference type="ChEBI" id="CHEBI:16452"/>
        <dbReference type="ChEBI" id="CHEBI:24646"/>
        <dbReference type="ChEBI" id="CHEBI:132124"/>
        <dbReference type="EC" id="1.1.5.4"/>
    </reaction>
</comment>
<comment type="cofactor">
    <cofactor evidence="1">
        <name>FAD</name>
        <dbReference type="ChEBI" id="CHEBI:57692"/>
    </cofactor>
</comment>
<comment type="pathway">
    <text evidence="1">Carbohydrate metabolism; tricarboxylic acid cycle; oxaloacetate from (S)-malate (quinone route): step 1/1.</text>
</comment>
<comment type="similarity">
    <text evidence="1">Belongs to the MQO family.</text>
</comment>
<keyword id="KW-0274">FAD</keyword>
<keyword id="KW-0285">Flavoprotein</keyword>
<keyword id="KW-0560">Oxidoreductase</keyword>
<keyword id="KW-0816">Tricarboxylic acid cycle</keyword>
<dbReference type="EC" id="1.1.5.4" evidence="1"/>
<dbReference type="EMBL" id="CP000243">
    <property type="protein sequence ID" value="ABE07957.1"/>
    <property type="molecule type" value="Genomic_DNA"/>
</dbReference>
<dbReference type="RefSeq" id="WP_000758066.1">
    <property type="nucleotide sequence ID" value="NZ_CP064825.1"/>
</dbReference>
<dbReference type="SMR" id="Q1R9K7"/>
<dbReference type="KEGG" id="eci:UTI89_C2490"/>
<dbReference type="HOGENOM" id="CLU_028151_0_0_6"/>
<dbReference type="UniPathway" id="UPA00223">
    <property type="reaction ID" value="UER01008"/>
</dbReference>
<dbReference type="Proteomes" id="UP000001952">
    <property type="component" value="Chromosome"/>
</dbReference>
<dbReference type="GO" id="GO:0047545">
    <property type="term" value="F:2-hydroxyglutarate dehydrogenase activity"/>
    <property type="evidence" value="ECO:0007669"/>
    <property type="project" value="TreeGrafter"/>
</dbReference>
<dbReference type="GO" id="GO:0008924">
    <property type="term" value="F:L-malate dehydrogenase (quinone) activity"/>
    <property type="evidence" value="ECO:0007669"/>
    <property type="project" value="UniProtKB-UniRule"/>
</dbReference>
<dbReference type="GO" id="GO:0006099">
    <property type="term" value="P:tricarboxylic acid cycle"/>
    <property type="evidence" value="ECO:0007669"/>
    <property type="project" value="UniProtKB-UniRule"/>
</dbReference>
<dbReference type="Gene3D" id="3.30.9.10">
    <property type="entry name" value="D-Amino Acid Oxidase, subunit A, domain 2"/>
    <property type="match status" value="1"/>
</dbReference>
<dbReference type="Gene3D" id="3.50.50.60">
    <property type="entry name" value="FAD/NAD(P)-binding domain"/>
    <property type="match status" value="1"/>
</dbReference>
<dbReference type="HAMAP" id="MF_00212">
    <property type="entry name" value="MQO"/>
    <property type="match status" value="1"/>
</dbReference>
<dbReference type="InterPro" id="IPR036188">
    <property type="entry name" value="FAD/NAD-bd_sf"/>
</dbReference>
<dbReference type="InterPro" id="IPR006231">
    <property type="entry name" value="MQO"/>
</dbReference>
<dbReference type="NCBIfam" id="TIGR01320">
    <property type="entry name" value="mal_quin_oxido"/>
    <property type="match status" value="1"/>
</dbReference>
<dbReference type="NCBIfam" id="NF003603">
    <property type="entry name" value="PRK05257.1-1"/>
    <property type="match status" value="1"/>
</dbReference>
<dbReference type="NCBIfam" id="NF003605">
    <property type="entry name" value="PRK05257.1-4"/>
    <property type="match status" value="1"/>
</dbReference>
<dbReference type="NCBIfam" id="NF003606">
    <property type="entry name" value="PRK05257.2-1"/>
    <property type="match status" value="1"/>
</dbReference>
<dbReference type="NCBIfam" id="NF003608">
    <property type="entry name" value="PRK05257.2-4"/>
    <property type="match status" value="1"/>
</dbReference>
<dbReference type="NCBIfam" id="NF003611">
    <property type="entry name" value="PRK05257.3-2"/>
    <property type="match status" value="1"/>
</dbReference>
<dbReference type="NCBIfam" id="NF009875">
    <property type="entry name" value="PRK13339.1"/>
    <property type="match status" value="1"/>
</dbReference>
<dbReference type="PANTHER" id="PTHR43104">
    <property type="entry name" value="L-2-HYDROXYGLUTARATE DEHYDROGENASE, MITOCHONDRIAL"/>
    <property type="match status" value="1"/>
</dbReference>
<dbReference type="PANTHER" id="PTHR43104:SF2">
    <property type="entry name" value="L-2-HYDROXYGLUTARATE DEHYDROGENASE, MITOCHONDRIAL"/>
    <property type="match status" value="1"/>
</dbReference>
<dbReference type="Pfam" id="PF06039">
    <property type="entry name" value="Mqo"/>
    <property type="match status" value="1"/>
</dbReference>
<dbReference type="SUPFAM" id="SSF51905">
    <property type="entry name" value="FAD/NAD(P)-binding domain"/>
    <property type="match status" value="1"/>
</dbReference>
<proteinExistence type="inferred from homology"/>
<protein>
    <recommendedName>
        <fullName evidence="1">Probable malate:quinone oxidoreductase</fullName>
        <ecNumber evidence="1">1.1.5.4</ecNumber>
    </recommendedName>
    <alternativeName>
        <fullName evidence="1">MQO</fullName>
    </alternativeName>
    <alternativeName>
        <fullName evidence="1">Malate dehydrogenase [quinone]</fullName>
    </alternativeName>
</protein>
<sequence length="548" mass="60230">MKKVTAMLFSMAVGLNAVSMAAKAKASEEQETDVLLIGGGIMSATLGTYLRELEPEWSMTMVERLEGVAQESSNGWNNAGTGHSALMELNYTPQNADGSISIEKAVAINEAFQISRQFWAHQVERGVLRTPRSFINTVPHMSFVWGEDNVNFLRARYAALQQSSLFRGMRYSEDHAQIKEWAPLVMEGRDPQQKVAATRTEIGTDVNYGEITRQLIASLQKKSNFSLQLSSEVRALKRNDDNTWTVTVADLKNGTAQNIRAKFVFIGAGGAALKLLQESGIPEAKDYAGFPVGGQFLVSENPDVVNHHLAKVYGKASVGAPPMSVPHIDTRVLDGKRVVLFGPFATFSTKFLKNGSLWDLMSSTTTSNVMPMMHVGLDNFDLVKYLVSQVMLSEEDRFEALKEYYPQAKKEDWRLWQAGQRVQIIKRDADKGGVLRLGTEVVSDQQGTIAALLGASPGASTAAPIMLNLLEKVFGDRVSSPQWQATLKAIVPSYGRKLNGDVAATERELQYTSEVLGLKYDKPQAADSTPKPQLKPQPVQKEVADIAL</sequence>
<accession>Q1R9K7</accession>
<name>MQO_ECOUT</name>
<reference key="1">
    <citation type="journal article" date="2006" name="Proc. Natl. Acad. Sci. U.S.A.">
        <title>Identification of genes subject to positive selection in uropathogenic strains of Escherichia coli: a comparative genomics approach.</title>
        <authorList>
            <person name="Chen S.L."/>
            <person name="Hung C.-S."/>
            <person name="Xu J."/>
            <person name="Reigstad C.S."/>
            <person name="Magrini V."/>
            <person name="Sabo A."/>
            <person name="Blasiar D."/>
            <person name="Bieri T."/>
            <person name="Meyer R.R."/>
            <person name="Ozersky P."/>
            <person name="Armstrong J.R."/>
            <person name="Fulton R.S."/>
            <person name="Latreille J.P."/>
            <person name="Spieth J."/>
            <person name="Hooton T.M."/>
            <person name="Mardis E.R."/>
            <person name="Hultgren S.J."/>
            <person name="Gordon J.I."/>
        </authorList>
    </citation>
    <scope>NUCLEOTIDE SEQUENCE [LARGE SCALE GENOMIC DNA]</scope>
    <source>
        <strain>UTI89 / UPEC</strain>
    </source>
</reference>
<gene>
    <name evidence="1" type="primary">mqo</name>
    <name type="ordered locus">UTI89_C2490</name>
</gene>
<evidence type="ECO:0000255" key="1">
    <source>
        <dbReference type="HAMAP-Rule" id="MF_00212"/>
    </source>
</evidence>
<evidence type="ECO:0000256" key="2">
    <source>
        <dbReference type="SAM" id="MobiDB-lite"/>
    </source>
</evidence>